<name>EXSD_PSEAE</name>
<accession>Q9I321</accession>
<comment type="function">
    <text evidence="1 2 3 4 5 6">Negative regulator of the type III secretion system regulon. Acts by disrupting transcriptional activator ExsA self-association and DNA-binding activity in absence of inducing signals (PubMed:12421316, PubMed:19369699, PubMed:20008065, PubMed:23279839). Upon host cell contact, this interaction is disrupted by the anti-antiactivator protein ExsC leading to ExsA activation (PubMed:15225323, PubMed:16980486).</text>
</comment>
<comment type="subunit">
    <text evidence="1 2 3 4 5 6">Can form homotrimer (PubMed:23279839). Interacts with ExsA; this interaction inhibits ExsA activity (PubMed:12421316, PubMed:19369699, PubMed:20008065). Interacts with ExsC; this interaction dissociates the ExsD-ExsA complex (PubMed:15225323, PubMed:16980486, PubMed:20008065).</text>
</comment>
<comment type="interaction">
    <interactant intactId="EBI-6409805">
        <id>Q9I321</id>
    </interactant>
    <interactant intactId="EBI-6307207">
        <id>P26993</id>
        <label>exsA</label>
    </interactant>
    <organismsDiffer>false</organismsDiffer>
    <experiments>2</experiments>
</comment>
<comment type="disruption phenotype">
    <text evidence="1">Absence of ExsD leads to transcription of the type III secretion system (T3SS) regulon derepression.</text>
</comment>
<organism>
    <name type="scientific">Pseudomonas aeruginosa (strain ATCC 15692 / DSM 22644 / CIP 104116 / JCM 14847 / LMG 12228 / 1C / PRS 101 / PAO1)</name>
    <dbReference type="NCBI Taxonomy" id="208964"/>
    <lineage>
        <taxon>Bacteria</taxon>
        <taxon>Pseudomonadati</taxon>
        <taxon>Pseudomonadota</taxon>
        <taxon>Gammaproteobacteria</taxon>
        <taxon>Pseudomonadales</taxon>
        <taxon>Pseudomonadaceae</taxon>
        <taxon>Pseudomonas</taxon>
    </lineage>
</organism>
<evidence type="ECO:0000269" key="1">
    <source>
    </source>
</evidence>
<evidence type="ECO:0000269" key="2">
    <source>
    </source>
</evidence>
<evidence type="ECO:0000269" key="3">
    <source>
    </source>
</evidence>
<evidence type="ECO:0000269" key="4">
    <source>
    </source>
</evidence>
<evidence type="ECO:0000269" key="5">
    <source>
    </source>
</evidence>
<evidence type="ECO:0000269" key="6">
    <source>
    </source>
</evidence>
<proteinExistence type="evidence at protein level"/>
<keyword id="KW-1185">Reference proteome</keyword>
<reference key="1">
    <citation type="journal article" date="2000" name="Nature">
        <title>Complete genome sequence of Pseudomonas aeruginosa PAO1, an opportunistic pathogen.</title>
        <authorList>
            <person name="Stover C.K."/>
            <person name="Pham X.-Q.T."/>
            <person name="Erwin A.L."/>
            <person name="Mizoguchi S.D."/>
            <person name="Warrener P."/>
            <person name="Hickey M.J."/>
            <person name="Brinkman F.S.L."/>
            <person name="Hufnagle W.O."/>
            <person name="Kowalik D.J."/>
            <person name="Lagrou M."/>
            <person name="Garber R.L."/>
            <person name="Goltry L."/>
            <person name="Tolentino E."/>
            <person name="Westbrock-Wadman S."/>
            <person name="Yuan Y."/>
            <person name="Brody L.L."/>
            <person name="Coulter S.N."/>
            <person name="Folger K.R."/>
            <person name="Kas A."/>
            <person name="Larbig K."/>
            <person name="Lim R.M."/>
            <person name="Smith K.A."/>
            <person name="Spencer D.H."/>
            <person name="Wong G.K.-S."/>
            <person name="Wu Z."/>
            <person name="Paulsen I.T."/>
            <person name="Reizer J."/>
            <person name="Saier M.H. Jr."/>
            <person name="Hancock R.E.W."/>
            <person name="Lory S."/>
            <person name="Olson M.V."/>
        </authorList>
    </citation>
    <scope>NUCLEOTIDE SEQUENCE [LARGE SCALE GENOMIC DNA]</scope>
    <source>
        <strain>ATCC 15692 / DSM 22644 / CIP 104116 / JCM 14847 / LMG 12228 / 1C / PRS 101 / PAO1</strain>
    </source>
</reference>
<reference key="2">
    <citation type="journal article" date="2002" name="Mol. Microbiol.">
        <title>ExsD is a negative regulator of the Pseudomonas aeruginosa type III secretion regulon.</title>
        <authorList>
            <person name="McCaw M.L."/>
            <person name="Lykken G.L."/>
            <person name="Singh P.K."/>
            <person name="Yahr T.L."/>
        </authorList>
    </citation>
    <scope>FUNCTION</scope>
    <scope>DISRUPTION PHENOTYPE</scope>
    <scope>INTERACTION WITH EXSA</scope>
</reference>
<reference key="3">
    <citation type="journal article" date="2004" name="Mol. Microbiol.">
        <title>A novel anti-anti-activator mechanism regulates expression of the Pseudomonas aeruginosa type III secretion system.</title>
        <authorList>
            <person name="Dasgupta N."/>
            <person name="Lykken G.L."/>
            <person name="Wolfgang M.C."/>
            <person name="Yahr T.L."/>
        </authorList>
    </citation>
    <scope>FUNCTION</scope>
    <scope>INTERACTION WITH EXSC</scope>
</reference>
<reference key="4">
    <citation type="journal article" date="2006" name="J. Bacteriol.">
        <title>Characterization of ExsC and ExsD self-association and heterocomplex formation.</title>
        <authorList>
            <person name="Lykken G.L."/>
            <person name="Chen G."/>
            <person name="Brutinel E.D."/>
            <person name="Chen L."/>
            <person name="Yahr T.L."/>
        </authorList>
    </citation>
    <scope>FUNCTION</scope>
    <scope>INTERACTION WITH EXSC</scope>
    <scope>DISRUPTION PHENOTYPE</scope>
</reference>
<reference key="5">
    <citation type="journal article" date="2009" name="J. Biol. Chem.">
        <title>Anti-activator ExsD forms a 1:1 complex with ExsA to inhibit transcription of type III secretion operons.</title>
        <authorList>
            <person name="Thibault J."/>
            <person name="Faudry E."/>
            <person name="Ebel C."/>
            <person name="Attree I."/>
            <person name="Elsen S."/>
        </authorList>
    </citation>
    <scope>FUNCTION</scope>
    <scope>INTERACTION WITH EXSA</scope>
</reference>
<reference key="6">
    <citation type="journal article" date="2010" name="J. Bacteriol.">
        <title>ExsD inhibits expression of the Pseudomonas aeruginosa type III secretion system by disrupting ExsA self-association and DNA binding activity.</title>
        <authorList>
            <person name="Brutinel E.D."/>
            <person name="Vakulskas C.A."/>
            <person name="Yahr T.L."/>
        </authorList>
    </citation>
    <scope>FUNCTION</scope>
    <scope>INTERACTION WITH EXSA AND EXSC</scope>
</reference>
<reference key="7">
    <citation type="journal article" date="2013" name="FEBS J.">
        <title>Self-trimerization of ExsD limits inhibition of the Pseudomonas aeruginosa transcriptional activator ExsA in vitro.</title>
        <authorList>
            <person name="Bernhards R.C."/>
            <person name="Marsden A.E."/>
            <person name="Esher S.K."/>
            <person name="Yahr T.L."/>
            <person name="Schubot F.D."/>
        </authorList>
    </citation>
    <scope>FUNCTION</scope>
    <scope>SUBUNIT</scope>
    <scope>MUTAGENESIS OF MET-59</scope>
</reference>
<dbReference type="EMBL" id="AE004091">
    <property type="protein sequence ID" value="AAG05103.1"/>
    <property type="molecule type" value="Genomic_DNA"/>
</dbReference>
<dbReference type="PIR" id="B83430">
    <property type="entry name" value="B83430"/>
</dbReference>
<dbReference type="RefSeq" id="NP_250405.1">
    <property type="nucleotide sequence ID" value="NC_002516.2"/>
</dbReference>
<dbReference type="RefSeq" id="WP_003100755.1">
    <property type="nucleotide sequence ID" value="NZ_QZGE01000003.1"/>
</dbReference>
<dbReference type="SMR" id="Q9I321"/>
<dbReference type="IntAct" id="Q9I321">
    <property type="interactions" value="2"/>
</dbReference>
<dbReference type="STRING" id="208964.PA1714"/>
<dbReference type="PaxDb" id="208964-PA1714"/>
<dbReference type="DNASU" id="880880"/>
<dbReference type="GeneID" id="880880"/>
<dbReference type="KEGG" id="pae:PA1714"/>
<dbReference type="PATRIC" id="fig|208964.12.peg.1777"/>
<dbReference type="PseudoCAP" id="PA1714"/>
<dbReference type="HOGENOM" id="CLU_1021707_0_0_6"/>
<dbReference type="InParanoid" id="Q9I321"/>
<dbReference type="OrthoDB" id="7000051at2"/>
<dbReference type="BioCyc" id="PAER208964:G1FZ6-1745-MONOMER"/>
<dbReference type="PHI-base" id="PHI:6400"/>
<dbReference type="Proteomes" id="UP000002438">
    <property type="component" value="Chromosome"/>
</dbReference>
<dbReference type="GO" id="GO:0071277">
    <property type="term" value="P:cellular response to calcium ion"/>
    <property type="evidence" value="ECO:0000315"/>
    <property type="project" value="PseudoCAP"/>
</dbReference>
<dbReference type="GO" id="GO:0045892">
    <property type="term" value="P:negative regulation of DNA-templated transcription"/>
    <property type="evidence" value="ECO:0000315"/>
    <property type="project" value="PseudoCAP"/>
</dbReference>
<dbReference type="GO" id="GO:0050709">
    <property type="term" value="P:negative regulation of protein secretion"/>
    <property type="evidence" value="ECO:0000315"/>
    <property type="project" value="PseudoCAP"/>
</dbReference>
<dbReference type="Gene3D" id="1.20.1270.190">
    <property type="match status" value="2"/>
</dbReference>
<dbReference type="Gene3D" id="1.10.8.520">
    <property type="entry name" value="ExsD N-terminal domain-like"/>
    <property type="match status" value="1"/>
</dbReference>
<dbReference type="InterPro" id="IPR048312">
    <property type="entry name" value="ExsD_C"/>
</dbReference>
<dbReference type="InterPro" id="IPR043101">
    <property type="entry name" value="ExsD_dom1"/>
</dbReference>
<dbReference type="InterPro" id="IPR043102">
    <property type="entry name" value="ExsD_dom2"/>
</dbReference>
<dbReference type="InterPro" id="IPR048311">
    <property type="entry name" value="ExsD_M"/>
</dbReference>
<dbReference type="InterPro" id="IPR031835">
    <property type="entry name" value="ExsD_N"/>
</dbReference>
<dbReference type="Pfam" id="PF16806">
    <property type="entry name" value="ExsD"/>
    <property type="match status" value="1"/>
</dbReference>
<dbReference type="Pfam" id="PF20905">
    <property type="entry name" value="ExsD_C"/>
    <property type="match status" value="1"/>
</dbReference>
<dbReference type="Pfam" id="PF20904">
    <property type="entry name" value="ExsD_M"/>
    <property type="match status" value="1"/>
</dbReference>
<feature type="chain" id="PRO_0000449830" description="Transcriptional antiactivator ExsD">
    <location>
        <begin position="1"/>
        <end position="276"/>
    </location>
</feature>
<feature type="mutagenesis site" description="Complete loss of trimer formation." evidence="6">
    <original>M</original>
    <variation>R</variation>
    <location>
        <position position="59"/>
    </location>
</feature>
<gene>
    <name type="primary">exsD</name>
    <name type="ordered locus">PA1714</name>
</gene>
<sequence>MEQEDDKQYSREAVFAGRRVSVVGSDARSRGRVPGYASSSLYRESGIISARQLALLQRMLPRLRLEQLFRCEWLQQRLARGLALGREEVRQILLCAAQDDDGWCSELGDRVNLAVPQSMIDWVLLPVYGWWESLLDQAIPGWRLSLVELETQSRQLRVKSEFWSRVAELEPEQAREELARVAKCQARTQEQVAELAGKLETASALAKSAWPNWQRGMATLLASGGLAGFEPIPEVLECLWQPLCRLDDDVGAADAVQAWLHERNLCQAQDHFYWQS</sequence>
<protein>
    <recommendedName>
        <fullName>Transcriptional antiactivator ExsD</fullName>
    </recommendedName>
</protein>